<protein>
    <recommendedName>
        <fullName evidence="1">Cysteine--tRNA ligase</fullName>
        <ecNumber evidence="1">6.1.1.16</ecNumber>
    </recommendedName>
    <alternativeName>
        <fullName evidence="1">Cysteinyl-tRNA synthetase</fullName>
        <shortName evidence="1">CysRS</shortName>
    </alternativeName>
</protein>
<proteinExistence type="inferred from homology"/>
<reference key="1">
    <citation type="journal article" date="2002" name="Proc. Natl. Acad. Sci. U.S.A.">
        <title>Genome sequence of the hyperthermophilic crenarchaeon Pyrobaculum aerophilum.</title>
        <authorList>
            <person name="Fitz-Gibbon S.T."/>
            <person name="Ladner H."/>
            <person name="Kim U.-J."/>
            <person name="Stetter K.O."/>
            <person name="Simon M.I."/>
            <person name="Miller J.H."/>
        </authorList>
    </citation>
    <scope>NUCLEOTIDE SEQUENCE [LARGE SCALE GENOMIC DNA]</scope>
    <source>
        <strain>ATCC 51768 / DSM 7523 / JCM 9630 / CIP 104966 / NBRC 100827 / IM2</strain>
    </source>
</reference>
<keyword id="KW-0030">Aminoacyl-tRNA synthetase</keyword>
<keyword id="KW-0067">ATP-binding</keyword>
<keyword id="KW-0963">Cytoplasm</keyword>
<keyword id="KW-0436">Ligase</keyword>
<keyword id="KW-0479">Metal-binding</keyword>
<keyword id="KW-0547">Nucleotide-binding</keyword>
<keyword id="KW-0648">Protein biosynthesis</keyword>
<keyword id="KW-1185">Reference proteome</keyword>
<keyword id="KW-0862">Zinc</keyword>
<organism>
    <name type="scientific">Pyrobaculum aerophilum (strain ATCC 51768 / DSM 7523 / JCM 9630 / CIP 104966 / NBRC 100827 / IM2)</name>
    <dbReference type="NCBI Taxonomy" id="178306"/>
    <lineage>
        <taxon>Archaea</taxon>
        <taxon>Thermoproteota</taxon>
        <taxon>Thermoprotei</taxon>
        <taxon>Thermoproteales</taxon>
        <taxon>Thermoproteaceae</taxon>
        <taxon>Pyrobaculum</taxon>
    </lineage>
</organism>
<accession>Q8ZYD8</accession>
<name>SYC_PYRAE</name>
<gene>
    <name evidence="1" type="primary">cysS</name>
    <name type="ordered locus">PAE0821</name>
</gene>
<sequence>MGVRIYNTATRQVEEFVTYVPKLARGYVCGITPYDHVHVGHGRVYVFFDMFRRYLEARGYEVRLVINFTDIDDKIINKAREEFGHDAYKRWKEVPERYIAEFFEMSNKLFIKPAHAYPRVTENVNEMVAWISTLVEKGYAYVAPDGSVYFEVGKVPNYGVLSRQKIEELIAGARVEPEPGKKNPLDFALWKSWTPGEPWWNSPWCPGRPGWHLECVVMSTKYLGAPFDFHGGGADLIFPHHENEIAIAKAYYGLDNFAKYWIHVGYLTVRGEKMSKSLGNVITLREVLSKYSGEALRLAYAMSHYRKPMEFSFELLDQAEEMVKTLYTAYDELSQAVADASDEDKEKLEYGKYIESFYAALEDDFSTPQAAQQLYGLARYIISTVLHRIDKASRQTAIDVLTQYVKMADILGVLERREIPKEVEEVIKAVVEARARLRREKMYQLADYLRERLAGIGVELHDFGQRTYYTYKRR</sequence>
<evidence type="ECO:0000255" key="1">
    <source>
        <dbReference type="HAMAP-Rule" id="MF_00041"/>
    </source>
</evidence>
<feature type="chain" id="PRO_0000159541" description="Cysteine--tRNA ligase">
    <location>
        <begin position="1"/>
        <end position="474"/>
    </location>
</feature>
<feature type="short sequence motif" description="'HIGH' region">
    <location>
        <begin position="31"/>
        <end position="41"/>
    </location>
</feature>
<feature type="short sequence motif" description="'KMSKS' region">
    <location>
        <begin position="273"/>
        <end position="277"/>
    </location>
</feature>
<feature type="binding site" evidence="1">
    <location>
        <position position="29"/>
    </location>
    <ligand>
        <name>Zn(2+)</name>
        <dbReference type="ChEBI" id="CHEBI:29105"/>
    </ligand>
</feature>
<feature type="binding site" evidence="1">
    <location>
        <position position="215"/>
    </location>
    <ligand>
        <name>Zn(2+)</name>
        <dbReference type="ChEBI" id="CHEBI:29105"/>
    </ligand>
</feature>
<feature type="binding site" evidence="1">
    <location>
        <position position="240"/>
    </location>
    <ligand>
        <name>Zn(2+)</name>
        <dbReference type="ChEBI" id="CHEBI:29105"/>
    </ligand>
</feature>
<feature type="binding site" evidence="1">
    <location>
        <position position="244"/>
    </location>
    <ligand>
        <name>Zn(2+)</name>
        <dbReference type="ChEBI" id="CHEBI:29105"/>
    </ligand>
</feature>
<feature type="binding site" evidence="1">
    <location>
        <position position="276"/>
    </location>
    <ligand>
        <name>ATP</name>
        <dbReference type="ChEBI" id="CHEBI:30616"/>
    </ligand>
</feature>
<dbReference type="EC" id="6.1.1.16" evidence="1"/>
<dbReference type="EMBL" id="AE009441">
    <property type="protein sequence ID" value="AAL63055.1"/>
    <property type="molecule type" value="Genomic_DNA"/>
</dbReference>
<dbReference type="SMR" id="Q8ZYD8"/>
<dbReference type="FunCoup" id="Q8ZYD8">
    <property type="interactions" value="168"/>
</dbReference>
<dbReference type="STRING" id="178306.PAE0821"/>
<dbReference type="EnsemblBacteria" id="AAL63055">
    <property type="protein sequence ID" value="AAL63055"/>
    <property type="gene ID" value="PAE0821"/>
</dbReference>
<dbReference type="KEGG" id="pai:PAE0821"/>
<dbReference type="PATRIC" id="fig|178306.9.peg.604"/>
<dbReference type="eggNOG" id="arCOG00486">
    <property type="taxonomic scope" value="Archaea"/>
</dbReference>
<dbReference type="HOGENOM" id="CLU_013528_0_1_2"/>
<dbReference type="InParanoid" id="Q8ZYD8"/>
<dbReference type="Proteomes" id="UP000002439">
    <property type="component" value="Chromosome"/>
</dbReference>
<dbReference type="GO" id="GO:0005737">
    <property type="term" value="C:cytoplasm"/>
    <property type="evidence" value="ECO:0000318"/>
    <property type="project" value="GO_Central"/>
</dbReference>
<dbReference type="GO" id="GO:0005524">
    <property type="term" value="F:ATP binding"/>
    <property type="evidence" value="ECO:0000318"/>
    <property type="project" value="GO_Central"/>
</dbReference>
<dbReference type="GO" id="GO:0004817">
    <property type="term" value="F:cysteine-tRNA ligase activity"/>
    <property type="evidence" value="ECO:0000318"/>
    <property type="project" value="GO_Central"/>
</dbReference>
<dbReference type="GO" id="GO:0008270">
    <property type="term" value="F:zinc ion binding"/>
    <property type="evidence" value="ECO:0007669"/>
    <property type="project" value="UniProtKB-UniRule"/>
</dbReference>
<dbReference type="GO" id="GO:0006423">
    <property type="term" value="P:cysteinyl-tRNA aminoacylation"/>
    <property type="evidence" value="ECO:0000318"/>
    <property type="project" value="GO_Central"/>
</dbReference>
<dbReference type="CDD" id="cd00672">
    <property type="entry name" value="CysRS_core"/>
    <property type="match status" value="1"/>
</dbReference>
<dbReference type="FunFam" id="3.40.50.620:FF:000130">
    <property type="entry name" value="Cysteine--tRNA ligase"/>
    <property type="match status" value="1"/>
</dbReference>
<dbReference type="Gene3D" id="1.20.120.1910">
    <property type="entry name" value="Cysteine-tRNA ligase, C-terminal anti-codon recognition domain"/>
    <property type="match status" value="1"/>
</dbReference>
<dbReference type="Gene3D" id="3.40.50.620">
    <property type="entry name" value="HUPs"/>
    <property type="match status" value="1"/>
</dbReference>
<dbReference type="HAMAP" id="MF_00041">
    <property type="entry name" value="Cys_tRNA_synth"/>
    <property type="match status" value="1"/>
</dbReference>
<dbReference type="InterPro" id="IPR015803">
    <property type="entry name" value="Cys-tRNA-ligase"/>
</dbReference>
<dbReference type="InterPro" id="IPR015273">
    <property type="entry name" value="Cys-tRNA-synt_Ia_DALR"/>
</dbReference>
<dbReference type="InterPro" id="IPR024909">
    <property type="entry name" value="Cys-tRNA/MSH_ligase"/>
</dbReference>
<dbReference type="InterPro" id="IPR014729">
    <property type="entry name" value="Rossmann-like_a/b/a_fold"/>
</dbReference>
<dbReference type="InterPro" id="IPR032678">
    <property type="entry name" value="tRNA-synt_1_cat_dom"/>
</dbReference>
<dbReference type="InterPro" id="IPR009080">
    <property type="entry name" value="tRNAsynth_Ia_anticodon-bd"/>
</dbReference>
<dbReference type="NCBIfam" id="TIGR00435">
    <property type="entry name" value="cysS"/>
    <property type="match status" value="1"/>
</dbReference>
<dbReference type="PANTHER" id="PTHR10890:SF3">
    <property type="entry name" value="CYSTEINE--TRNA LIGASE, CYTOPLASMIC"/>
    <property type="match status" value="1"/>
</dbReference>
<dbReference type="PANTHER" id="PTHR10890">
    <property type="entry name" value="CYSTEINYL-TRNA SYNTHETASE"/>
    <property type="match status" value="1"/>
</dbReference>
<dbReference type="Pfam" id="PF09190">
    <property type="entry name" value="DALR_2"/>
    <property type="match status" value="1"/>
</dbReference>
<dbReference type="Pfam" id="PF01406">
    <property type="entry name" value="tRNA-synt_1e"/>
    <property type="match status" value="1"/>
</dbReference>
<dbReference type="PRINTS" id="PR00983">
    <property type="entry name" value="TRNASYNTHCYS"/>
</dbReference>
<dbReference type="SMART" id="SM00840">
    <property type="entry name" value="DALR_2"/>
    <property type="match status" value="1"/>
</dbReference>
<dbReference type="SUPFAM" id="SSF47323">
    <property type="entry name" value="Anticodon-binding domain of a subclass of class I aminoacyl-tRNA synthetases"/>
    <property type="match status" value="1"/>
</dbReference>
<dbReference type="SUPFAM" id="SSF52374">
    <property type="entry name" value="Nucleotidylyl transferase"/>
    <property type="match status" value="1"/>
</dbReference>
<comment type="catalytic activity">
    <reaction evidence="1">
        <text>tRNA(Cys) + L-cysteine + ATP = L-cysteinyl-tRNA(Cys) + AMP + diphosphate</text>
        <dbReference type="Rhea" id="RHEA:17773"/>
        <dbReference type="Rhea" id="RHEA-COMP:9661"/>
        <dbReference type="Rhea" id="RHEA-COMP:9679"/>
        <dbReference type="ChEBI" id="CHEBI:30616"/>
        <dbReference type="ChEBI" id="CHEBI:33019"/>
        <dbReference type="ChEBI" id="CHEBI:35235"/>
        <dbReference type="ChEBI" id="CHEBI:78442"/>
        <dbReference type="ChEBI" id="CHEBI:78517"/>
        <dbReference type="ChEBI" id="CHEBI:456215"/>
        <dbReference type="EC" id="6.1.1.16"/>
    </reaction>
</comment>
<comment type="cofactor">
    <cofactor evidence="1">
        <name>Zn(2+)</name>
        <dbReference type="ChEBI" id="CHEBI:29105"/>
    </cofactor>
    <text evidence="1">Binds 1 zinc ion per subunit.</text>
</comment>
<comment type="subcellular location">
    <subcellularLocation>
        <location evidence="1">Cytoplasm</location>
    </subcellularLocation>
</comment>
<comment type="similarity">
    <text evidence="1">Belongs to the class-I aminoacyl-tRNA synthetase family.</text>
</comment>